<reference key="1">
    <citation type="submission" date="2006-09" db="EMBL/GenBank/DDBJ databases">
        <authorList>
            <consortium name="NIH - Xenopus Gene Collection (XGC) project"/>
        </authorList>
    </citation>
    <scope>NUCLEOTIDE SEQUENCE [LARGE SCALE MRNA]</scope>
    <source>
        <tissue>Testis</tissue>
    </source>
</reference>
<dbReference type="EC" id="1.14.11.-"/>
<dbReference type="EMBL" id="BC123960">
    <property type="protein sequence ID" value="AAI23961.1"/>
    <property type="molecule type" value="mRNA"/>
</dbReference>
<dbReference type="RefSeq" id="NP_001072664.1">
    <property type="nucleotide sequence ID" value="NM_001079196.1"/>
</dbReference>
<dbReference type="SMR" id="Q08D35"/>
<dbReference type="FunCoup" id="Q08D35">
    <property type="interactions" value="2174"/>
</dbReference>
<dbReference type="STRING" id="8364.ENSXETP00000015921"/>
<dbReference type="GeneID" id="780121"/>
<dbReference type="KEGG" id="xtr:780121"/>
<dbReference type="AGR" id="Xenbase:XB-GENE-5900920"/>
<dbReference type="CTD" id="80853"/>
<dbReference type="Xenbase" id="XB-GENE-5900920">
    <property type="gene designation" value="kdm7a"/>
</dbReference>
<dbReference type="InParanoid" id="Q08D35"/>
<dbReference type="OMA" id="PWEEDIT"/>
<dbReference type="OrthoDB" id="5876800at2759"/>
<dbReference type="Proteomes" id="UP000008143">
    <property type="component" value="Chromosome 3"/>
</dbReference>
<dbReference type="GO" id="GO:0005634">
    <property type="term" value="C:nucleus"/>
    <property type="evidence" value="ECO:0007669"/>
    <property type="project" value="UniProtKB-SubCell"/>
</dbReference>
<dbReference type="GO" id="GO:0071558">
    <property type="term" value="F:histone H3K27me2/H3K27me3 demethylase activity"/>
    <property type="evidence" value="ECO:0000250"/>
    <property type="project" value="UniProtKB"/>
</dbReference>
<dbReference type="GO" id="GO:0051864">
    <property type="term" value="F:histone H3K36 demethylase activity"/>
    <property type="evidence" value="ECO:0000250"/>
    <property type="project" value="UniProtKB"/>
</dbReference>
<dbReference type="GO" id="GO:0140683">
    <property type="term" value="F:histone H3K9me/H3K9me2 demethylase activity"/>
    <property type="evidence" value="ECO:0000250"/>
    <property type="project" value="UniProtKB"/>
</dbReference>
<dbReference type="GO" id="GO:0035575">
    <property type="term" value="F:histone H4K20 demethylase activity"/>
    <property type="evidence" value="ECO:0000250"/>
    <property type="project" value="UniProtKB"/>
</dbReference>
<dbReference type="GO" id="GO:0005506">
    <property type="term" value="F:iron ion binding"/>
    <property type="evidence" value="ECO:0000250"/>
    <property type="project" value="UniProtKB"/>
</dbReference>
<dbReference type="GO" id="GO:0008270">
    <property type="term" value="F:zinc ion binding"/>
    <property type="evidence" value="ECO:0000250"/>
    <property type="project" value="UniProtKB"/>
</dbReference>
<dbReference type="GO" id="GO:0030901">
    <property type="term" value="P:midbrain development"/>
    <property type="evidence" value="ECO:0000250"/>
    <property type="project" value="UniProtKB"/>
</dbReference>
<dbReference type="CDD" id="cd15640">
    <property type="entry name" value="PHD_KDM7"/>
    <property type="match status" value="1"/>
</dbReference>
<dbReference type="FunFam" id="1.20.58.1360:FF:000003">
    <property type="entry name" value="Lysine-specific demethylase 7A"/>
    <property type="match status" value="1"/>
</dbReference>
<dbReference type="FunFam" id="2.60.120.650:FF:000021">
    <property type="entry name" value="Lysine-specific demethylase 7A"/>
    <property type="match status" value="1"/>
</dbReference>
<dbReference type="FunFam" id="3.30.40.10:FF:000193">
    <property type="entry name" value="lysine-specific demethylase PHF2 isoform X1"/>
    <property type="match status" value="1"/>
</dbReference>
<dbReference type="Gene3D" id="1.20.58.1360">
    <property type="match status" value="1"/>
</dbReference>
<dbReference type="Gene3D" id="2.60.120.650">
    <property type="entry name" value="Cupin"/>
    <property type="match status" value="1"/>
</dbReference>
<dbReference type="InterPro" id="IPR041070">
    <property type="entry name" value="JHD"/>
</dbReference>
<dbReference type="InterPro" id="IPR050690">
    <property type="entry name" value="JHDM1_Histone_Demethylase"/>
</dbReference>
<dbReference type="InterPro" id="IPR003347">
    <property type="entry name" value="JmjC_dom"/>
</dbReference>
<dbReference type="InterPro" id="IPR019786">
    <property type="entry name" value="Zinc_finger_PHD-type_CS"/>
</dbReference>
<dbReference type="InterPro" id="IPR011011">
    <property type="entry name" value="Znf_FYVE_PHD"/>
</dbReference>
<dbReference type="InterPro" id="IPR001965">
    <property type="entry name" value="Znf_PHD"/>
</dbReference>
<dbReference type="InterPro" id="IPR019787">
    <property type="entry name" value="Znf_PHD-finger"/>
</dbReference>
<dbReference type="PANTHER" id="PTHR23123">
    <property type="entry name" value="PHD/F-BOX CONTAINING PROTEIN"/>
    <property type="match status" value="1"/>
</dbReference>
<dbReference type="Pfam" id="PF17811">
    <property type="entry name" value="JHD"/>
    <property type="match status" value="1"/>
</dbReference>
<dbReference type="Pfam" id="PF02373">
    <property type="entry name" value="JmjC"/>
    <property type="match status" value="1"/>
</dbReference>
<dbReference type="Pfam" id="PF00628">
    <property type="entry name" value="PHD"/>
    <property type="match status" value="1"/>
</dbReference>
<dbReference type="SMART" id="SM00558">
    <property type="entry name" value="JmjC"/>
    <property type="match status" value="1"/>
</dbReference>
<dbReference type="SMART" id="SM00249">
    <property type="entry name" value="PHD"/>
    <property type="match status" value="1"/>
</dbReference>
<dbReference type="SUPFAM" id="SSF51197">
    <property type="entry name" value="Clavaminate synthase-like"/>
    <property type="match status" value="1"/>
</dbReference>
<dbReference type="SUPFAM" id="SSF57903">
    <property type="entry name" value="FYVE/PHD zinc finger"/>
    <property type="match status" value="1"/>
</dbReference>
<dbReference type="PROSITE" id="PS51184">
    <property type="entry name" value="JMJC"/>
    <property type="match status" value="1"/>
</dbReference>
<dbReference type="PROSITE" id="PS01359">
    <property type="entry name" value="ZF_PHD_1"/>
    <property type="match status" value="1"/>
</dbReference>
<dbReference type="PROSITE" id="PS50016">
    <property type="entry name" value="ZF_PHD_2"/>
    <property type="match status" value="1"/>
</dbReference>
<sequence>MAGAAPVYCVCRQPYDVSRFMIECDICKDWFHSSCVKVEEHQAADIDLYHCPNCEVLHGPSQLKKRRNWHRHDYTEPDDGTKPVQAGTRTFIQQLQARSFPSADDLLLKMNGSQLTQRYLEKQGFNLPIMVPRLDDLGLRLPPPTFSVMDVERYVGGEKIIDVIDVARQADSKMKLKNFVKYFMNPDRPKVLNVISLEFSDTKMADLVKVPDISKKLSWVENYWPDDSFFTKPFVQKYCLMGVQDSYTDFHIDFGGTSVWYHVLWGEKVFYLIKPSDENLALYESWSSSVTQSEEFFGDKVDKCYKCVVKQGHTLFVPTGWIHAVLTSQDCMAFGGNFLHNLNIGMQLRCYEMEKRLKTPDLFKFPFFEAICWFVAKNLLETLKELKEDGFHPPNYLKHGVKALISALKSWMKKESVAEHAFEIPDNIRPGHLIKELSKVIRSVEEEGNRPVKSQGIHGHCPVSRSSHEKSSHHSGRKARRLRDHSTKTPTNLDILEHHTREVLKRLEMSPWEEDAGTYKLNMRFNKPLLPSSTEPDQKVRDNGIRLLLSNGRIIRDERQPFTDRSLYTADSEDEDDRARSRKAKDIKQEKPCSTSGMEDKAETQKPLNMFFESVKSELRNGSSEYSDISDSEGSEDNCTNQKHFSEESESSGDDDDEEEEEEEERQEPIRNLKEEHSGRRLPCDPNFPWPDHDSPQKRECPTSTSMEQEAVQGMLSMASLHYPSALPTPAKSTDCNIRGGYPQLHIRVSQGNGKEHLDSHSHKAANSDHHVKDEGEFSALDWIRQPDASCRLSPQDSCQVPQSLRREFAHEEYEKAPEDKHYLEIEHWDSAEYQPEKYDPESSMSSGECHLSDGSLSPTRIYGDTAAAVPLHPTKRPASNPPPISNQATKGKRPKKGMATAKQRLGKILKLNRNGHARFFV</sequence>
<gene>
    <name type="primary">kdm7a</name>
    <name type="synonym">jhdm1d</name>
    <name type="synonym">kdm7</name>
</gene>
<name>KDM7A_XENTR</name>
<keyword id="KW-0156">Chromatin regulator</keyword>
<keyword id="KW-0223">Dioxygenase</keyword>
<keyword id="KW-0408">Iron</keyword>
<keyword id="KW-0479">Metal-binding</keyword>
<keyword id="KW-0524">Neurogenesis</keyword>
<keyword id="KW-0539">Nucleus</keyword>
<keyword id="KW-0560">Oxidoreductase</keyword>
<keyword id="KW-1185">Reference proteome</keyword>
<keyword id="KW-0804">Transcription</keyword>
<keyword id="KW-0805">Transcription regulation</keyword>
<keyword id="KW-0862">Zinc</keyword>
<keyword id="KW-0863">Zinc-finger</keyword>
<feature type="chain" id="PRO_0000391905" description="Lysine-specific demethylase 7A">
    <location>
        <begin position="1"/>
        <end position="922"/>
    </location>
</feature>
<feature type="domain" description="JmjC" evidence="3">
    <location>
        <begin position="199"/>
        <end position="355"/>
    </location>
</feature>
<feature type="zinc finger region" description="PHD-type" evidence="2">
    <location>
        <begin position="6"/>
        <end position="57"/>
    </location>
</feature>
<feature type="region of interest" description="Disordered" evidence="4">
    <location>
        <begin position="445"/>
        <end position="490"/>
    </location>
</feature>
<feature type="region of interest" description="Disordered" evidence="4">
    <location>
        <begin position="565"/>
        <end position="607"/>
    </location>
</feature>
<feature type="region of interest" description="Disordered" evidence="4">
    <location>
        <begin position="622"/>
        <end position="711"/>
    </location>
</feature>
<feature type="region of interest" description="Disordered" evidence="4">
    <location>
        <begin position="754"/>
        <end position="773"/>
    </location>
</feature>
<feature type="region of interest" description="Disordered" evidence="4">
    <location>
        <begin position="872"/>
        <end position="902"/>
    </location>
</feature>
<feature type="compositionally biased region" description="Basic residues" evidence="4">
    <location>
        <begin position="473"/>
        <end position="483"/>
    </location>
</feature>
<feature type="compositionally biased region" description="Acidic residues" evidence="4">
    <location>
        <begin position="648"/>
        <end position="666"/>
    </location>
</feature>
<feature type="compositionally biased region" description="Basic and acidic residues" evidence="4">
    <location>
        <begin position="667"/>
        <end position="683"/>
    </location>
</feature>
<feature type="compositionally biased region" description="Basic and acidic residues" evidence="4">
    <location>
        <begin position="691"/>
        <end position="701"/>
    </location>
</feature>
<feature type="binding site" evidence="1">
    <location>
        <position position="248"/>
    </location>
    <ligand>
        <name>substrate</name>
    </ligand>
</feature>
<feature type="binding site" evidence="3">
    <location>
        <position position="251"/>
    </location>
    <ligand>
        <name>Fe cation</name>
        <dbReference type="ChEBI" id="CHEBI:24875"/>
        <note>catalytic</note>
    </ligand>
</feature>
<feature type="binding site" evidence="3">
    <location>
        <position position="253"/>
    </location>
    <ligand>
        <name>Fe cation</name>
        <dbReference type="ChEBI" id="CHEBI:24875"/>
        <note>catalytic</note>
    </ligand>
</feature>
<feature type="binding site" evidence="1">
    <location>
        <position position="268"/>
    </location>
    <ligand>
        <name>substrate</name>
    </ligand>
</feature>
<feature type="binding site" evidence="3">
    <location>
        <position position="323"/>
    </location>
    <ligand>
        <name>Fe cation</name>
        <dbReference type="ChEBI" id="CHEBI:24875"/>
        <note>catalytic</note>
    </ligand>
</feature>
<proteinExistence type="evidence at transcript level"/>
<comment type="function">
    <text evidence="1">Histone demethylase required for brain development. Specifically demethylates dimethylated 'Lys-9' and 'Lys-27' (H3K9me2 and H3K27me2, respectively) of histone H3 and monomethylated histone H4 'Lys-20' residue (H4K20Me1), thereby playing a central role in histone code (By similarity).</text>
</comment>
<comment type="cofactor">
    <cofactor evidence="1">
        <name>Fe(2+)</name>
        <dbReference type="ChEBI" id="CHEBI:29033"/>
    </cofactor>
    <text evidence="1">Binds 1 Fe(2+) ion per subunit.</text>
</comment>
<comment type="subcellular location">
    <subcellularLocation>
        <location evidence="1">Nucleus</location>
    </subcellularLocation>
</comment>
<comment type="domain">
    <text evidence="1">The PHD-type zinc finger mediates the binding to H3K4me3. Binding to H3K4me3 prevents its access to H3K9me2 (By similarity).</text>
</comment>
<comment type="similarity">
    <text evidence="5">Belongs to the JHDM1 histone demethylase family. JHDM1D subfamily.</text>
</comment>
<accession>Q08D35</accession>
<organism>
    <name type="scientific">Xenopus tropicalis</name>
    <name type="common">Western clawed frog</name>
    <name type="synonym">Silurana tropicalis</name>
    <dbReference type="NCBI Taxonomy" id="8364"/>
    <lineage>
        <taxon>Eukaryota</taxon>
        <taxon>Metazoa</taxon>
        <taxon>Chordata</taxon>
        <taxon>Craniata</taxon>
        <taxon>Vertebrata</taxon>
        <taxon>Euteleostomi</taxon>
        <taxon>Amphibia</taxon>
        <taxon>Batrachia</taxon>
        <taxon>Anura</taxon>
        <taxon>Pipoidea</taxon>
        <taxon>Pipidae</taxon>
        <taxon>Xenopodinae</taxon>
        <taxon>Xenopus</taxon>
        <taxon>Silurana</taxon>
    </lineage>
</organism>
<evidence type="ECO:0000250" key="1"/>
<evidence type="ECO:0000255" key="2">
    <source>
        <dbReference type="PROSITE-ProRule" id="PRU00146"/>
    </source>
</evidence>
<evidence type="ECO:0000255" key="3">
    <source>
        <dbReference type="PROSITE-ProRule" id="PRU00538"/>
    </source>
</evidence>
<evidence type="ECO:0000256" key="4">
    <source>
        <dbReference type="SAM" id="MobiDB-lite"/>
    </source>
</evidence>
<evidence type="ECO:0000305" key="5"/>
<protein>
    <recommendedName>
        <fullName>Lysine-specific demethylase 7A</fullName>
        <ecNumber>1.14.11.-</ecNumber>
    </recommendedName>
    <alternativeName>
        <fullName>JmjC domain-containing histone demethylation protein 1D</fullName>
    </alternativeName>
    <alternativeName>
        <fullName>Lysine-specific demethylase 7</fullName>
    </alternativeName>
</protein>